<feature type="chain" id="PRO_0000364399" description="S-adenosylmethionine decarboxylase beta chain" evidence="1">
    <location>
        <begin position="1"/>
        <end position="111"/>
    </location>
</feature>
<feature type="chain" id="PRO_0000364400" description="S-adenosylmethionine decarboxylase alpha chain" evidence="1">
    <location>
        <begin position="112"/>
        <end position="264"/>
    </location>
</feature>
<feature type="active site" description="Schiff-base intermediate with substrate; via pyruvic acid" evidence="1">
    <location>
        <position position="112"/>
    </location>
</feature>
<feature type="active site" description="Proton acceptor; for processing activity" evidence="1">
    <location>
        <position position="117"/>
    </location>
</feature>
<feature type="active site" description="Proton donor; for catalytic activity" evidence="1">
    <location>
        <position position="140"/>
    </location>
</feature>
<feature type="site" description="Cleavage (non-hydrolytic); by autolysis" evidence="1">
    <location>
        <begin position="111"/>
        <end position="112"/>
    </location>
</feature>
<feature type="modified residue" description="Pyruvic acid (Ser); by autocatalysis" evidence="1">
    <location>
        <position position="112"/>
    </location>
</feature>
<protein>
    <recommendedName>
        <fullName evidence="1">S-adenosylmethionine decarboxylase proenzyme</fullName>
        <shortName evidence="1">AdoMetDC</shortName>
        <shortName evidence="1">SAMDC</shortName>
        <ecNumber evidence="1">4.1.1.50</ecNumber>
    </recommendedName>
    <component>
        <recommendedName>
            <fullName evidence="1">S-adenosylmethionine decarboxylase beta chain</fullName>
        </recommendedName>
    </component>
    <component>
        <recommendedName>
            <fullName evidence="1">S-adenosylmethionine decarboxylase alpha chain</fullName>
        </recommendedName>
    </component>
</protein>
<reference key="1">
    <citation type="journal article" date="2011" name="J. Bacteriol.">
        <title>Comparative genomics of 28 Salmonella enterica isolates: evidence for CRISPR-mediated adaptive sublineage evolution.</title>
        <authorList>
            <person name="Fricke W.F."/>
            <person name="Mammel M.K."/>
            <person name="McDermott P.F."/>
            <person name="Tartera C."/>
            <person name="White D.G."/>
            <person name="Leclerc J.E."/>
            <person name="Ravel J."/>
            <person name="Cebula T.A."/>
        </authorList>
    </citation>
    <scope>NUCLEOTIDE SEQUENCE [LARGE SCALE GENOMIC DNA]</scope>
    <source>
        <strain>CT_02021853</strain>
    </source>
</reference>
<comment type="function">
    <text evidence="1">Catalyzes the decarboxylation of S-adenosylmethionine to S-adenosylmethioninamine (dcAdoMet), the propylamine donor required for the synthesis of the polyamines spermine and spermidine from the diamine putrescine.</text>
</comment>
<comment type="catalytic activity">
    <reaction evidence="1">
        <text>S-adenosyl-L-methionine + H(+) = S-adenosyl 3-(methylsulfanyl)propylamine + CO2</text>
        <dbReference type="Rhea" id="RHEA:15981"/>
        <dbReference type="ChEBI" id="CHEBI:15378"/>
        <dbReference type="ChEBI" id="CHEBI:16526"/>
        <dbReference type="ChEBI" id="CHEBI:57443"/>
        <dbReference type="ChEBI" id="CHEBI:59789"/>
        <dbReference type="EC" id="4.1.1.50"/>
    </reaction>
</comment>
<comment type="cofactor">
    <cofactor evidence="1">
        <name>pyruvate</name>
        <dbReference type="ChEBI" id="CHEBI:15361"/>
    </cofactor>
    <text evidence="1">Binds 1 pyruvoyl group covalently per subunit.</text>
</comment>
<comment type="pathway">
    <text evidence="1">Amine and polyamine biosynthesis; S-adenosylmethioninamine biosynthesis; S-adenosylmethioninamine from S-adenosyl-L-methionine: step 1/1.</text>
</comment>
<comment type="subunit">
    <text evidence="1">Heterooctamer of four alpha and four beta chains arranged as a tetramer of alpha/beta heterodimers.</text>
</comment>
<comment type="PTM">
    <text evidence="1">Is synthesized initially as an inactive proenzyme. Formation of the active enzyme involves a self-maturation process in which the active site pyruvoyl group is generated from an internal serine residue via an autocatalytic post-translational modification. Two non-identical subunits are generated from the proenzyme in this reaction, and the pyruvate is formed at the N-terminus of the alpha chain, which is derived from the carboxyl end of the proenzyme. The post-translation cleavage follows an unusual pathway, termed non-hydrolytic serinolysis, in which the side chain hydroxyl group of the serine supplies its oxygen atom to form the C-terminus of the beta chain, while the remainder of the serine residue undergoes an oxidative deamination to produce ammonia and the pyruvoyl group blocking the N-terminus of the alpha chain.</text>
</comment>
<comment type="similarity">
    <text evidence="1">Belongs to the prokaryotic AdoMetDC family. Type 2 subfamily.</text>
</comment>
<evidence type="ECO:0000255" key="1">
    <source>
        <dbReference type="HAMAP-Rule" id="MF_00465"/>
    </source>
</evidence>
<proteinExistence type="inferred from homology"/>
<keyword id="KW-0068">Autocatalytic cleavage</keyword>
<keyword id="KW-0210">Decarboxylase</keyword>
<keyword id="KW-0456">Lyase</keyword>
<keyword id="KW-0620">Polyamine biosynthesis</keyword>
<keyword id="KW-0670">Pyruvate</keyword>
<keyword id="KW-0949">S-adenosyl-L-methionine</keyword>
<keyword id="KW-0704">Schiff base</keyword>
<keyword id="KW-0745">Spermidine biosynthesis</keyword>
<keyword id="KW-0865">Zymogen</keyword>
<gene>
    <name evidence="1" type="primary">speD</name>
    <name type="ordered locus">SeD_A0180</name>
</gene>
<dbReference type="EC" id="4.1.1.50" evidence="1"/>
<dbReference type="EMBL" id="CP001144">
    <property type="protein sequence ID" value="ACH77864.1"/>
    <property type="molecule type" value="Genomic_DNA"/>
</dbReference>
<dbReference type="RefSeq" id="WP_000734294.1">
    <property type="nucleotide sequence ID" value="NC_011205.1"/>
</dbReference>
<dbReference type="KEGG" id="sed:SeD_A0180"/>
<dbReference type="HOGENOM" id="CLU_092007_0_0_6"/>
<dbReference type="UniPathway" id="UPA00331">
    <property type="reaction ID" value="UER00451"/>
</dbReference>
<dbReference type="Proteomes" id="UP000008322">
    <property type="component" value="Chromosome"/>
</dbReference>
<dbReference type="GO" id="GO:0005829">
    <property type="term" value="C:cytosol"/>
    <property type="evidence" value="ECO:0007669"/>
    <property type="project" value="TreeGrafter"/>
</dbReference>
<dbReference type="GO" id="GO:0004014">
    <property type="term" value="F:adenosylmethionine decarboxylase activity"/>
    <property type="evidence" value="ECO:0007669"/>
    <property type="project" value="UniProtKB-UniRule"/>
</dbReference>
<dbReference type="GO" id="GO:0008295">
    <property type="term" value="P:spermidine biosynthetic process"/>
    <property type="evidence" value="ECO:0007669"/>
    <property type="project" value="UniProtKB-UniRule"/>
</dbReference>
<dbReference type="FunFam" id="3.60.90.10:FF:000001">
    <property type="entry name" value="S-adenosylmethionine decarboxylase proenzyme"/>
    <property type="match status" value="1"/>
</dbReference>
<dbReference type="Gene3D" id="3.60.90.10">
    <property type="entry name" value="S-adenosylmethionine decarboxylase"/>
    <property type="match status" value="1"/>
</dbReference>
<dbReference type="HAMAP" id="MF_00465">
    <property type="entry name" value="AdoMetDC_2"/>
    <property type="match status" value="1"/>
</dbReference>
<dbReference type="InterPro" id="IPR003826">
    <property type="entry name" value="AdoMetDC_fam_prok"/>
</dbReference>
<dbReference type="InterPro" id="IPR009165">
    <property type="entry name" value="S-AdoMet_deCO2ase_bac"/>
</dbReference>
<dbReference type="InterPro" id="IPR016067">
    <property type="entry name" value="S-AdoMet_deCO2ase_core"/>
</dbReference>
<dbReference type="NCBIfam" id="TIGR03331">
    <property type="entry name" value="SAM_DCase_Eco"/>
    <property type="match status" value="1"/>
</dbReference>
<dbReference type="PANTHER" id="PTHR33866">
    <property type="entry name" value="S-ADENOSYLMETHIONINE DECARBOXYLASE PROENZYME"/>
    <property type="match status" value="1"/>
</dbReference>
<dbReference type="PANTHER" id="PTHR33866:SF1">
    <property type="entry name" value="S-ADENOSYLMETHIONINE DECARBOXYLASE PROENZYME"/>
    <property type="match status" value="1"/>
</dbReference>
<dbReference type="Pfam" id="PF02675">
    <property type="entry name" value="AdoMet_dc"/>
    <property type="match status" value="1"/>
</dbReference>
<dbReference type="PIRSF" id="PIRSF001356">
    <property type="entry name" value="SAM_decarboxylas"/>
    <property type="match status" value="1"/>
</dbReference>
<dbReference type="SUPFAM" id="SSF56276">
    <property type="entry name" value="S-adenosylmethionine decarboxylase"/>
    <property type="match status" value="1"/>
</dbReference>
<sequence length="264" mass="30400">MKKLKLHGFNNLTKSLSFCIYDICYAKTAEERDGYIAYIDELYNANRLTEILSETCSIIGANILNIARQDYEPQGASVTILVSEEPVDPKLIDQTEHPGPLPETVVAHLDKSHICVHTYPESHPEGGLCTFRADIEVSTCGVISPLKALNYLIHQLESDIVTIDYRVRGFTRDVNGMKHFIDHEINSIQNFMSEDMKSLYDMVDVNVYQENIFHTKMLLKEFDLKHYMFHTKPEDLTETERQQITAALWKEMREIYYGRNISAV</sequence>
<name>SPED_SALDC</name>
<accession>B5FIB3</accession>
<organism>
    <name type="scientific">Salmonella dublin (strain CT_02021853)</name>
    <dbReference type="NCBI Taxonomy" id="439851"/>
    <lineage>
        <taxon>Bacteria</taxon>
        <taxon>Pseudomonadati</taxon>
        <taxon>Pseudomonadota</taxon>
        <taxon>Gammaproteobacteria</taxon>
        <taxon>Enterobacterales</taxon>
        <taxon>Enterobacteriaceae</taxon>
        <taxon>Salmonella</taxon>
    </lineage>
</organism>